<comment type="function">
    <text evidence="4 6 7 8">NAD-dependent histone deacetylase, which contributes together with HST4 to histone H3 'Lys-56' deacetylation, regulation of telomeric silencing, proper cell cycle progression, DNA damage control, DNA recombination, and genomic maintenance.</text>
</comment>
<comment type="catalytic activity">
    <reaction evidence="2">
        <text>N(6)-acetyl-L-lysyl-[protein] + NAD(+) + H2O = 2''-O-acetyl-ADP-D-ribose + nicotinamide + L-lysyl-[protein]</text>
        <dbReference type="Rhea" id="RHEA:43636"/>
        <dbReference type="Rhea" id="RHEA-COMP:9752"/>
        <dbReference type="Rhea" id="RHEA-COMP:10731"/>
        <dbReference type="ChEBI" id="CHEBI:15377"/>
        <dbReference type="ChEBI" id="CHEBI:17154"/>
        <dbReference type="ChEBI" id="CHEBI:29969"/>
        <dbReference type="ChEBI" id="CHEBI:57540"/>
        <dbReference type="ChEBI" id="CHEBI:61930"/>
        <dbReference type="ChEBI" id="CHEBI:83767"/>
        <dbReference type="EC" id="2.3.1.286"/>
    </reaction>
</comment>
<comment type="cofactor">
    <cofactor evidence="1">
        <name>Zn(2+)</name>
        <dbReference type="ChEBI" id="CHEBI:29105"/>
    </cofactor>
    <text evidence="1">Binds 1 zinc ion per subunit.</text>
</comment>
<comment type="subcellular location">
    <subcellularLocation>
        <location>Cytoplasm</location>
    </subcellularLocation>
    <subcellularLocation>
        <location>Nucleus</location>
    </subcellularLocation>
</comment>
<comment type="miscellaneous">
    <text evidence="5">Present with 319 molecules/cell in log phase SD medium.</text>
</comment>
<comment type="similarity">
    <text evidence="9">Belongs to the sirtuin family. Class I subfamily.</text>
</comment>
<sequence length="447" mass="50524">MTSVSPSPPASRSGSMCSDLPSSLQTEKLAHIIGLDADDEVLRRVTKQLSRSRRIACLTGAGISCNAGIPDFRSSDGLYDLVKKDCSQYWSIKSGREMFDISLFRDDFKISIFAKFMERLYSNVQLAKPTKTHKFIAHLKDRNKLLRCYTQNIDGLEESIGLTLSNRKLPLTSFSSHWKNLDVVQLHGDLKTLSCTKCFQTFPWSRYWSRCLRRGELPLCPDCEALINKRLNEGKRTLGSNVGILRPNIVLYGENHPSCEIITQGLNLDIIKGNPDFLIIMGTSLKVDGVKQLVKKLSKKIHDRGGLIILVNKTPIGESSWHGIIDYQIHSDCDNWVTFLESQIPDFFKTQDQIKKLRQLKREASDLRKQMKAQKDSIGTPPTTPLRTAQGIDIQGNNELNTKIKSLNTVKRKILSPENSSEEDEEENLDTRKRAKIRPTFGDNQAS</sequence>
<dbReference type="EC" id="2.3.1.286" evidence="2"/>
<dbReference type="EMBL" id="U39062">
    <property type="protein sequence ID" value="AAA81034.1"/>
    <property type="molecule type" value="Genomic_DNA"/>
</dbReference>
<dbReference type="EMBL" id="X87331">
    <property type="protein sequence ID" value="CAA60741.1"/>
    <property type="molecule type" value="Genomic_DNA"/>
</dbReference>
<dbReference type="EMBL" id="Z74933">
    <property type="protein sequence ID" value="CAA99215.1"/>
    <property type="molecule type" value="Genomic_DNA"/>
</dbReference>
<dbReference type="EMBL" id="AY723866">
    <property type="protein sequence ID" value="AAU09783.1"/>
    <property type="molecule type" value="Genomic_DNA"/>
</dbReference>
<dbReference type="EMBL" id="BK006948">
    <property type="protein sequence ID" value="DAA10807.1"/>
    <property type="molecule type" value="Genomic_DNA"/>
</dbReference>
<dbReference type="PIR" id="S54631">
    <property type="entry name" value="S54631"/>
</dbReference>
<dbReference type="RefSeq" id="NP_014668.1">
    <property type="nucleotide sequence ID" value="NM_001183444.1"/>
</dbReference>
<dbReference type="SMR" id="P53687"/>
<dbReference type="BioGRID" id="34428">
    <property type="interactions" value="307"/>
</dbReference>
<dbReference type="DIP" id="DIP-1378N"/>
<dbReference type="FunCoup" id="P53687">
    <property type="interactions" value="122"/>
</dbReference>
<dbReference type="IntAct" id="P53687">
    <property type="interactions" value="3"/>
</dbReference>
<dbReference type="MINT" id="P53687"/>
<dbReference type="STRING" id="4932.YOR025W"/>
<dbReference type="iPTMnet" id="P53687"/>
<dbReference type="PaxDb" id="4932-YOR025W"/>
<dbReference type="PeptideAtlas" id="P53687"/>
<dbReference type="EnsemblFungi" id="YOR025W_mRNA">
    <property type="protein sequence ID" value="YOR025W"/>
    <property type="gene ID" value="YOR025W"/>
</dbReference>
<dbReference type="GeneID" id="854190"/>
<dbReference type="KEGG" id="sce:YOR025W"/>
<dbReference type="AGR" id="SGD:S000005551"/>
<dbReference type="SGD" id="S000005551">
    <property type="gene designation" value="HST3"/>
</dbReference>
<dbReference type="VEuPathDB" id="FungiDB:YOR025W"/>
<dbReference type="eggNOG" id="KOG2684">
    <property type="taxonomic scope" value="Eukaryota"/>
</dbReference>
<dbReference type="HOGENOM" id="CLU_021544_4_0_1"/>
<dbReference type="InParanoid" id="P53687"/>
<dbReference type="OMA" id="THKFIAH"/>
<dbReference type="OrthoDB" id="2919105at2759"/>
<dbReference type="BioCyc" id="YEAST:G3O-33572-MONOMER"/>
<dbReference type="BioGRID-ORCS" id="854190">
    <property type="hits" value="0 hits in 10 CRISPR screens"/>
</dbReference>
<dbReference type="PRO" id="PR:P53687"/>
<dbReference type="Proteomes" id="UP000002311">
    <property type="component" value="Chromosome XV"/>
</dbReference>
<dbReference type="RNAct" id="P53687">
    <property type="molecule type" value="protein"/>
</dbReference>
<dbReference type="GO" id="GO:0000781">
    <property type="term" value="C:chromosome, telomeric region"/>
    <property type="evidence" value="ECO:0007669"/>
    <property type="project" value="GOC"/>
</dbReference>
<dbReference type="GO" id="GO:0005737">
    <property type="term" value="C:cytoplasm"/>
    <property type="evidence" value="ECO:0007669"/>
    <property type="project" value="UniProtKB-SubCell"/>
</dbReference>
<dbReference type="GO" id="GO:0005634">
    <property type="term" value="C:nucleus"/>
    <property type="evidence" value="ECO:0000318"/>
    <property type="project" value="GO_Central"/>
</dbReference>
<dbReference type="GO" id="GO:0017136">
    <property type="term" value="F:histone deacetylase activity, NAD-dependent"/>
    <property type="evidence" value="ECO:0000314"/>
    <property type="project" value="SGD"/>
</dbReference>
<dbReference type="GO" id="GO:0046872">
    <property type="term" value="F:metal ion binding"/>
    <property type="evidence" value="ECO:0007669"/>
    <property type="project" value="UniProtKB-KW"/>
</dbReference>
<dbReference type="GO" id="GO:0070403">
    <property type="term" value="F:NAD+ binding"/>
    <property type="evidence" value="ECO:0000318"/>
    <property type="project" value="GO_Central"/>
</dbReference>
<dbReference type="GO" id="GO:0006351">
    <property type="term" value="P:DNA-templated transcription"/>
    <property type="evidence" value="ECO:0000314"/>
    <property type="project" value="SGD"/>
</dbReference>
<dbReference type="GO" id="GO:0009299">
    <property type="term" value="P:mRNA transcription"/>
    <property type="evidence" value="ECO:0000314"/>
    <property type="project" value="SGD"/>
</dbReference>
<dbReference type="GO" id="GO:0000183">
    <property type="term" value="P:rDNA heterochromatin formation"/>
    <property type="evidence" value="ECO:0000318"/>
    <property type="project" value="GO_Central"/>
</dbReference>
<dbReference type="GO" id="GO:1990414">
    <property type="term" value="P:replication-born double-strand break repair via sister chromatid exchange"/>
    <property type="evidence" value="ECO:0000315"/>
    <property type="project" value="SGD"/>
</dbReference>
<dbReference type="GO" id="GO:0046459">
    <property type="term" value="P:short-chain fatty acid metabolic process"/>
    <property type="evidence" value="ECO:0000315"/>
    <property type="project" value="SGD"/>
</dbReference>
<dbReference type="GO" id="GO:0031509">
    <property type="term" value="P:subtelomeric heterochromatin formation"/>
    <property type="evidence" value="ECO:0000316"/>
    <property type="project" value="SGD"/>
</dbReference>
<dbReference type="CDD" id="cd01407">
    <property type="entry name" value="SIR2-fam"/>
    <property type="match status" value="1"/>
</dbReference>
<dbReference type="Gene3D" id="3.30.1600.10">
    <property type="entry name" value="SIR2/SIRT2 'Small Domain"/>
    <property type="match status" value="1"/>
</dbReference>
<dbReference type="Gene3D" id="3.40.50.1220">
    <property type="entry name" value="TPP-binding domain"/>
    <property type="match status" value="1"/>
</dbReference>
<dbReference type="InterPro" id="IPR029035">
    <property type="entry name" value="DHS-like_NAD/FAD-binding_dom"/>
</dbReference>
<dbReference type="InterPro" id="IPR050134">
    <property type="entry name" value="NAD-dep_sirtuin_deacylases"/>
</dbReference>
<dbReference type="InterPro" id="IPR003000">
    <property type="entry name" value="Sirtuin"/>
</dbReference>
<dbReference type="InterPro" id="IPR026591">
    <property type="entry name" value="Sirtuin_cat_small_dom_sf"/>
</dbReference>
<dbReference type="InterPro" id="IPR026590">
    <property type="entry name" value="Ssirtuin_cat_dom"/>
</dbReference>
<dbReference type="PANTHER" id="PTHR11085:SF8">
    <property type="entry name" value="NAD-DEPENDENT HISTONE DEACETYLASE HST3"/>
    <property type="match status" value="1"/>
</dbReference>
<dbReference type="PANTHER" id="PTHR11085">
    <property type="entry name" value="NAD-DEPENDENT PROTEIN DEACYLASE SIRTUIN-5, MITOCHONDRIAL-RELATED"/>
    <property type="match status" value="1"/>
</dbReference>
<dbReference type="Pfam" id="PF02146">
    <property type="entry name" value="SIR2"/>
    <property type="match status" value="1"/>
</dbReference>
<dbReference type="SUPFAM" id="SSF52467">
    <property type="entry name" value="DHS-like NAD/FAD-binding domain"/>
    <property type="match status" value="1"/>
</dbReference>
<dbReference type="PROSITE" id="PS50305">
    <property type="entry name" value="SIRTUIN"/>
    <property type="match status" value="1"/>
</dbReference>
<organism>
    <name type="scientific">Saccharomyces cerevisiae (strain ATCC 204508 / S288c)</name>
    <name type="common">Baker's yeast</name>
    <dbReference type="NCBI Taxonomy" id="559292"/>
    <lineage>
        <taxon>Eukaryota</taxon>
        <taxon>Fungi</taxon>
        <taxon>Dikarya</taxon>
        <taxon>Ascomycota</taxon>
        <taxon>Saccharomycotina</taxon>
        <taxon>Saccharomycetes</taxon>
        <taxon>Saccharomycetales</taxon>
        <taxon>Saccharomycetaceae</taxon>
        <taxon>Saccharomyces</taxon>
    </lineage>
</organism>
<feature type="chain" id="PRO_0000110283" description="NAD-dependent histone deacetylase HST3">
    <location>
        <begin position="1"/>
        <end position="447"/>
    </location>
</feature>
<feature type="domain" description="Deacetylase sirtuin-type" evidence="2">
    <location>
        <begin position="35"/>
        <end position="363"/>
    </location>
</feature>
<feature type="region of interest" description="Disordered" evidence="3">
    <location>
        <begin position="1"/>
        <end position="21"/>
    </location>
</feature>
<feature type="region of interest" description="Disordered" evidence="3">
    <location>
        <begin position="365"/>
        <end position="393"/>
    </location>
</feature>
<feature type="region of interest" description="Disordered" evidence="3">
    <location>
        <begin position="411"/>
        <end position="447"/>
    </location>
</feature>
<feature type="compositionally biased region" description="Basic and acidic residues" evidence="3">
    <location>
        <begin position="365"/>
        <end position="375"/>
    </location>
</feature>
<feature type="active site" description="Proton acceptor" evidence="2">
    <location>
        <position position="187"/>
    </location>
</feature>
<feature type="binding site" evidence="1">
    <location>
        <begin position="60"/>
        <end position="79"/>
    </location>
    <ligand>
        <name>NAD(+)</name>
        <dbReference type="ChEBI" id="CHEBI:57540"/>
    </ligand>
</feature>
<feature type="binding site" evidence="1">
    <location>
        <begin position="151"/>
        <end position="154"/>
    </location>
    <ligand>
        <name>NAD(+)</name>
        <dbReference type="ChEBI" id="CHEBI:57540"/>
    </ligand>
</feature>
<feature type="binding site" evidence="2">
    <location>
        <position position="195"/>
    </location>
    <ligand>
        <name>Zn(2+)</name>
        <dbReference type="ChEBI" id="CHEBI:29105"/>
    </ligand>
</feature>
<feature type="binding site" evidence="2">
    <location>
        <position position="198"/>
    </location>
    <ligand>
        <name>Zn(2+)</name>
        <dbReference type="ChEBI" id="CHEBI:29105"/>
    </ligand>
</feature>
<feature type="binding site" evidence="2">
    <location>
        <position position="220"/>
    </location>
    <ligand>
        <name>Zn(2+)</name>
        <dbReference type="ChEBI" id="CHEBI:29105"/>
    </ligand>
</feature>
<feature type="binding site" evidence="2">
    <location>
        <position position="223"/>
    </location>
    <ligand>
        <name>Zn(2+)</name>
        <dbReference type="ChEBI" id="CHEBI:29105"/>
    </ligand>
</feature>
<feature type="binding site" evidence="1">
    <location>
        <begin position="282"/>
        <end position="284"/>
    </location>
    <ligand>
        <name>NAD(+)</name>
        <dbReference type="ChEBI" id="CHEBI:57540"/>
    </ligand>
</feature>
<feature type="binding site" evidence="1">
    <location>
        <begin position="312"/>
        <end position="314"/>
    </location>
    <ligand>
        <name>NAD(+)</name>
        <dbReference type="ChEBI" id="CHEBI:57540"/>
    </ligand>
</feature>
<feature type="binding site" evidence="1">
    <location>
        <position position="333"/>
    </location>
    <ligand>
        <name>NAD(+)</name>
        <dbReference type="ChEBI" id="CHEBI:57540"/>
    </ligand>
</feature>
<feature type="sequence conflict" description="In Ref. 4; AAU09783." evidence="9" ref="4">
    <original>E</original>
    <variation>G</variation>
    <location>
        <position position="418"/>
    </location>
</feature>
<accession>P53687</accession>
<accession>D6W291</accession>
<accession>Q66R16</accession>
<name>HST3_YEAST</name>
<reference key="1">
    <citation type="journal article" date="1995" name="Genes Dev.">
        <title>The SIR2 gene family, conserved from bacteria to humans, functions in silencing, cell cycle progression, and chromosome stability.</title>
        <authorList>
            <person name="Brachmann C.B."/>
            <person name="Sherman J.M."/>
            <person name="Devine S.E."/>
            <person name="Cameron E.E."/>
            <person name="Pillus L."/>
            <person name="Boeke J.D."/>
        </authorList>
    </citation>
    <scope>NUCLEOTIDE SEQUENCE [GENOMIC DNA]</scope>
    <source>
        <strain>S288c / YPH1</strain>
    </source>
</reference>
<reference key="2">
    <citation type="journal article" date="1997" name="Nature">
        <title>The nucleotide sequence of Saccharomyces cerevisiae chromosome XV.</title>
        <authorList>
            <person name="Dujon B."/>
            <person name="Albermann K."/>
            <person name="Aldea M."/>
            <person name="Alexandraki D."/>
            <person name="Ansorge W."/>
            <person name="Arino J."/>
            <person name="Benes V."/>
            <person name="Bohn C."/>
            <person name="Bolotin-Fukuhara M."/>
            <person name="Bordonne R."/>
            <person name="Boyer J."/>
            <person name="Camasses A."/>
            <person name="Casamayor A."/>
            <person name="Casas C."/>
            <person name="Cheret G."/>
            <person name="Cziepluch C."/>
            <person name="Daignan-Fornier B."/>
            <person name="Dang V.-D."/>
            <person name="de Haan M."/>
            <person name="Delius H."/>
            <person name="Durand P."/>
            <person name="Fairhead C."/>
            <person name="Feldmann H."/>
            <person name="Gaillon L."/>
            <person name="Galisson F."/>
            <person name="Gamo F.-J."/>
            <person name="Gancedo C."/>
            <person name="Goffeau A."/>
            <person name="Goulding S.E."/>
            <person name="Grivell L.A."/>
            <person name="Habbig B."/>
            <person name="Hand N.J."/>
            <person name="Hani J."/>
            <person name="Hattenhorst U."/>
            <person name="Hebling U."/>
            <person name="Hernando Y."/>
            <person name="Herrero E."/>
            <person name="Heumann K."/>
            <person name="Hiesel R."/>
            <person name="Hilger F."/>
            <person name="Hofmann B."/>
            <person name="Hollenberg C.P."/>
            <person name="Hughes B."/>
            <person name="Jauniaux J.-C."/>
            <person name="Kalogeropoulos A."/>
            <person name="Katsoulou C."/>
            <person name="Kordes E."/>
            <person name="Lafuente M.J."/>
            <person name="Landt O."/>
            <person name="Louis E.J."/>
            <person name="Maarse A.C."/>
            <person name="Madania A."/>
            <person name="Mannhaupt G."/>
            <person name="Marck C."/>
            <person name="Martin R.P."/>
            <person name="Mewes H.-W."/>
            <person name="Michaux G."/>
            <person name="Paces V."/>
            <person name="Parle-McDermott A.G."/>
            <person name="Pearson B.M."/>
            <person name="Perrin A."/>
            <person name="Pettersson B."/>
            <person name="Poch O."/>
            <person name="Pohl T.M."/>
            <person name="Poirey R."/>
            <person name="Portetelle D."/>
            <person name="Pujol A."/>
            <person name="Purnelle B."/>
            <person name="Ramezani Rad M."/>
            <person name="Rechmann S."/>
            <person name="Schwager C."/>
            <person name="Schweizer M."/>
            <person name="Sor F."/>
            <person name="Sterky F."/>
            <person name="Tarassov I.A."/>
            <person name="Teodoru C."/>
            <person name="Tettelin H."/>
            <person name="Thierry A."/>
            <person name="Tobiasch E."/>
            <person name="Tzermia M."/>
            <person name="Uhlen M."/>
            <person name="Unseld M."/>
            <person name="Valens M."/>
            <person name="Vandenbol M."/>
            <person name="Vetter I."/>
            <person name="Vlcek C."/>
            <person name="Voet M."/>
            <person name="Volckaert G."/>
            <person name="Voss H."/>
            <person name="Wambutt R."/>
            <person name="Wedler H."/>
            <person name="Wiemann S."/>
            <person name="Winsor B."/>
            <person name="Wolfe K.H."/>
            <person name="Zollner A."/>
            <person name="Zumstein E."/>
            <person name="Kleine K."/>
        </authorList>
    </citation>
    <scope>NUCLEOTIDE SEQUENCE [LARGE SCALE GENOMIC DNA]</scope>
    <source>
        <strain>ATCC 204508 / S288c</strain>
    </source>
</reference>
<reference key="3">
    <citation type="journal article" date="2014" name="G3 (Bethesda)">
        <title>The reference genome sequence of Saccharomyces cerevisiae: Then and now.</title>
        <authorList>
            <person name="Engel S.R."/>
            <person name="Dietrich F.S."/>
            <person name="Fisk D.G."/>
            <person name="Binkley G."/>
            <person name="Balakrishnan R."/>
            <person name="Costanzo M.C."/>
            <person name="Dwight S.S."/>
            <person name="Hitz B.C."/>
            <person name="Karra K."/>
            <person name="Nash R.S."/>
            <person name="Weng S."/>
            <person name="Wong E.D."/>
            <person name="Lloyd P."/>
            <person name="Skrzypek M.S."/>
            <person name="Miyasato S.R."/>
            <person name="Simison M."/>
            <person name="Cherry J.M."/>
        </authorList>
    </citation>
    <scope>GENOME REANNOTATION</scope>
    <source>
        <strain>ATCC 204508 / S288c</strain>
    </source>
</reference>
<reference key="4">
    <citation type="journal article" date="2007" name="Genome Res.">
        <title>Approaching a complete repository of sequence-verified protein-encoding clones for Saccharomyces cerevisiae.</title>
        <authorList>
            <person name="Hu Y."/>
            <person name="Rolfs A."/>
            <person name="Bhullar B."/>
            <person name="Murthy T.V.S."/>
            <person name="Zhu C."/>
            <person name="Berger M.F."/>
            <person name="Camargo A.A."/>
            <person name="Kelley F."/>
            <person name="McCarron S."/>
            <person name="Jepson D."/>
            <person name="Richardson A."/>
            <person name="Raphael J."/>
            <person name="Moreira D."/>
            <person name="Taycher E."/>
            <person name="Zuo D."/>
            <person name="Mohr S."/>
            <person name="Kane M.F."/>
            <person name="Williamson J."/>
            <person name="Simpson A.J.G."/>
            <person name="Bulyk M.L."/>
            <person name="Harlow E."/>
            <person name="Marsischky G."/>
            <person name="Kolodner R.D."/>
            <person name="LaBaer J."/>
        </authorList>
    </citation>
    <scope>NUCLEOTIDE SEQUENCE [GENOMIC DNA]</scope>
    <source>
        <strain>ATCC 204508 / S288c</strain>
    </source>
</reference>
<reference key="5">
    <citation type="journal article" date="2000" name="Proc. Natl. Acad. Sci. U.S.A.">
        <title>A phylogenetically conserved NAD+-dependent protein deacetylase activity in the Sir2 protein family.</title>
        <authorList>
            <person name="Smith J.S."/>
            <person name="Brachmann C.B."/>
            <person name="Celic I."/>
            <person name="Kenna M.A."/>
            <person name="Muhammad S."/>
            <person name="Starai V.J."/>
            <person name="Avalos J.L."/>
            <person name="Escalante-Semerena J.C."/>
            <person name="Grubmeyer C."/>
            <person name="Wolberger C."/>
            <person name="Boeke J.D."/>
        </authorList>
    </citation>
    <scope>FUNCTION</scope>
</reference>
<reference key="6">
    <citation type="journal article" date="2003" name="Nature">
        <title>Global analysis of protein localization in budding yeast.</title>
        <authorList>
            <person name="Huh W.-K."/>
            <person name="Falvo J.V."/>
            <person name="Gerke L.C."/>
            <person name="Carroll A.S."/>
            <person name="Howson R.W."/>
            <person name="Weissman J.S."/>
            <person name="O'Shea E.K."/>
        </authorList>
    </citation>
    <scope>SUBCELLULAR LOCATION [LARGE SCALE ANALYSIS]</scope>
</reference>
<reference key="7">
    <citation type="journal article" date="2003" name="Nature">
        <title>Global analysis of protein expression in yeast.</title>
        <authorList>
            <person name="Ghaemmaghami S."/>
            <person name="Huh W.-K."/>
            <person name="Bower K."/>
            <person name="Howson R.W."/>
            <person name="Belle A."/>
            <person name="Dephoure N."/>
            <person name="O'Shea E.K."/>
            <person name="Weissman J.S."/>
        </authorList>
    </citation>
    <scope>LEVEL OF PROTEIN EXPRESSION [LARGE SCALE ANALYSIS]</scope>
</reference>
<reference key="8">
    <citation type="journal article" date="2006" name="Cell">
        <title>A DNA integrity network in the yeast Saccharomyces cerevisiae.</title>
        <authorList>
            <person name="Pan X."/>
            <person name="Ye P."/>
            <person name="Yuan D.S."/>
            <person name="Wang X."/>
            <person name="Bader J.S."/>
            <person name="Boeke J.D."/>
        </authorList>
    </citation>
    <scope>FUNCTION</scope>
</reference>
<reference key="9">
    <citation type="journal article" date="2006" name="Cell Cycle">
        <title>Taking it off: regulation of H3 K56 acetylation by Hst3 and Hst4.</title>
        <authorList>
            <person name="Miller K.M."/>
            <person name="Maas N.L."/>
            <person name="Toczyski D.P."/>
        </authorList>
    </citation>
    <scope>FUNCTION</scope>
    <scope>SUBCELLULAR LOCATION</scope>
</reference>
<reference key="10">
    <citation type="journal article" date="2006" name="Curr. Biol.">
        <title>The sirtuins Hst3 and Hst4p preserve genome integrity by controlling histone H3 lysine 56 deacetylation.</title>
        <authorList>
            <person name="Celic I."/>
            <person name="Masumoto H."/>
            <person name="Griffith W.P."/>
            <person name="Meluh P."/>
            <person name="Cotter R.J."/>
            <person name="Boeke J.D."/>
            <person name="Verreault A."/>
        </authorList>
    </citation>
    <scope>FUNCTION</scope>
</reference>
<proteinExistence type="evidence at protein level"/>
<gene>
    <name type="primary">HST3</name>
    <name type="ordered locus">YOR025W</name>
    <name type="ORF">OR26.15</name>
</gene>
<protein>
    <recommendedName>
        <fullName>NAD-dependent histone deacetylase HST3</fullName>
        <ecNumber evidence="2">2.3.1.286</ecNumber>
    </recommendedName>
    <alternativeName>
        <fullName>Homologous to SIR2 protein 3</fullName>
    </alternativeName>
    <alternativeName>
        <fullName>Regulatory protein SIR2 homolog 3</fullName>
    </alternativeName>
</protein>
<evidence type="ECO:0000250" key="1"/>
<evidence type="ECO:0000255" key="2">
    <source>
        <dbReference type="PROSITE-ProRule" id="PRU00236"/>
    </source>
</evidence>
<evidence type="ECO:0000256" key="3">
    <source>
        <dbReference type="SAM" id="MobiDB-lite"/>
    </source>
</evidence>
<evidence type="ECO:0000269" key="4">
    <source>
    </source>
</evidence>
<evidence type="ECO:0000269" key="5">
    <source>
    </source>
</evidence>
<evidence type="ECO:0000269" key="6">
    <source>
    </source>
</evidence>
<evidence type="ECO:0000269" key="7">
    <source>
    </source>
</evidence>
<evidence type="ECO:0000269" key="8">
    <source>
    </source>
</evidence>
<evidence type="ECO:0000305" key="9"/>
<keyword id="KW-0963">Cytoplasm</keyword>
<keyword id="KW-0479">Metal-binding</keyword>
<keyword id="KW-0520">NAD</keyword>
<keyword id="KW-0539">Nucleus</keyword>
<keyword id="KW-1185">Reference proteome</keyword>
<keyword id="KW-0678">Repressor</keyword>
<keyword id="KW-0804">Transcription</keyword>
<keyword id="KW-0805">Transcription regulation</keyword>
<keyword id="KW-0808">Transferase</keyword>
<keyword id="KW-0862">Zinc</keyword>